<name>OR3A1_HUMAN</name>
<protein>
    <recommendedName>
        <fullName>Olfactory receptor 3A1</fullName>
    </recommendedName>
    <alternativeName>
        <fullName>Olfactory receptor 17-40</fullName>
        <shortName>OR17-40</shortName>
    </alternativeName>
    <alternativeName>
        <fullName>Olfactory receptor OR17-15</fullName>
    </alternativeName>
</protein>
<dbReference type="EMBL" id="X80391">
    <property type="protein sequence ID" value="CAA56602.1"/>
    <property type="molecule type" value="Genomic_DNA"/>
</dbReference>
<dbReference type="EMBL" id="U58675">
    <property type="status" value="NOT_ANNOTATED_CDS"/>
    <property type="molecule type" value="Genomic_DNA"/>
</dbReference>
<dbReference type="EMBL" id="AF087924">
    <property type="protein sequence ID" value="AAF37314.1"/>
    <property type="molecule type" value="Genomic_DNA"/>
</dbReference>
<dbReference type="EMBL" id="AC087498">
    <property type="status" value="NOT_ANNOTATED_CDS"/>
    <property type="molecule type" value="Genomic_DNA"/>
</dbReference>
<dbReference type="EMBL" id="BC069414">
    <property type="protein sequence ID" value="AAH69414.1"/>
    <property type="molecule type" value="mRNA"/>
</dbReference>
<dbReference type="EMBL" id="BC096187">
    <property type="protein sequence ID" value="AAH96187.1"/>
    <property type="molecule type" value="mRNA"/>
</dbReference>
<dbReference type="EMBL" id="BC096188">
    <property type="protein sequence ID" value="AAH96188.1"/>
    <property type="molecule type" value="mRNA"/>
</dbReference>
<dbReference type="EMBL" id="BC096189">
    <property type="protein sequence ID" value="AAH96189.1"/>
    <property type="molecule type" value="mRNA"/>
</dbReference>
<dbReference type="EMBL" id="BC096190">
    <property type="protein sequence ID" value="AAH96190.1"/>
    <property type="molecule type" value="mRNA"/>
</dbReference>
<dbReference type="EMBL" id="U04683">
    <property type="protein sequence ID" value="AAA18347.1"/>
    <property type="molecule type" value="Genomic_DNA"/>
</dbReference>
<dbReference type="EMBL" id="BK004238">
    <property type="protein sequence ID" value="DAA04636.1"/>
    <property type="molecule type" value="Genomic_DNA"/>
</dbReference>
<dbReference type="CCDS" id="CCDS11023.1"/>
<dbReference type="PIR" id="I38476">
    <property type="entry name" value="I38476"/>
</dbReference>
<dbReference type="PIR" id="JC4658">
    <property type="entry name" value="JC4658"/>
</dbReference>
<dbReference type="RefSeq" id="NP_002541.2">
    <property type="nucleotide sequence ID" value="NM_002550.3"/>
</dbReference>
<dbReference type="RefSeq" id="XP_016880184.1">
    <property type="nucleotide sequence ID" value="XM_017024695.1"/>
</dbReference>
<dbReference type="RefSeq" id="XP_016880185.1">
    <property type="nucleotide sequence ID" value="XM_017024696.1"/>
</dbReference>
<dbReference type="SMR" id="P47881"/>
<dbReference type="BioGRID" id="111038">
    <property type="interactions" value="4"/>
</dbReference>
<dbReference type="FunCoup" id="P47881">
    <property type="interactions" value="464"/>
</dbReference>
<dbReference type="IntAct" id="P47881">
    <property type="interactions" value="2"/>
</dbReference>
<dbReference type="MINT" id="P47881"/>
<dbReference type="STRING" id="9606.ENSP00000313803"/>
<dbReference type="GlyCosmos" id="P47881">
    <property type="glycosylation" value="1 site, No reported glycans"/>
</dbReference>
<dbReference type="GlyGen" id="P47881">
    <property type="glycosylation" value="1 site, 1 N-linked glycan (1 site)"/>
</dbReference>
<dbReference type="iPTMnet" id="P47881"/>
<dbReference type="PhosphoSitePlus" id="P47881"/>
<dbReference type="BioMuta" id="OR3A1"/>
<dbReference type="DMDM" id="148880124"/>
<dbReference type="jPOST" id="P47881"/>
<dbReference type="MassIVE" id="P47881"/>
<dbReference type="PaxDb" id="9606-ENSP00000313803"/>
<dbReference type="Antibodypedia" id="52931">
    <property type="antibodies" value="50 antibodies from 14 providers"/>
</dbReference>
<dbReference type="DNASU" id="4994"/>
<dbReference type="Ensembl" id="ENST00000323404.2">
    <property type="protein sequence ID" value="ENSP00000313803.1"/>
    <property type="gene ID" value="ENSG00000180090.6"/>
</dbReference>
<dbReference type="GeneID" id="4994"/>
<dbReference type="KEGG" id="hsa:4994"/>
<dbReference type="MANE-Select" id="ENST00000323404.2">
    <property type="protein sequence ID" value="ENSP00000313803.1"/>
    <property type="RefSeq nucleotide sequence ID" value="NM_002550.3"/>
    <property type="RefSeq protein sequence ID" value="NP_002541.2"/>
</dbReference>
<dbReference type="UCSC" id="uc002fvh.1">
    <property type="organism name" value="human"/>
</dbReference>
<dbReference type="AGR" id="HGNC:8282"/>
<dbReference type="CTD" id="4994"/>
<dbReference type="GeneCards" id="OR3A1"/>
<dbReference type="HGNC" id="HGNC:8282">
    <property type="gene designation" value="OR3A1"/>
</dbReference>
<dbReference type="HPA" id="ENSG00000180090">
    <property type="expression patterns" value="Not detected"/>
</dbReference>
<dbReference type="neXtProt" id="NX_P47881"/>
<dbReference type="OpenTargets" id="ENSG00000180090"/>
<dbReference type="PharmGKB" id="PA32223"/>
<dbReference type="VEuPathDB" id="HostDB:ENSG00000180090"/>
<dbReference type="eggNOG" id="ENOG502RU17">
    <property type="taxonomic scope" value="Eukaryota"/>
</dbReference>
<dbReference type="GeneTree" id="ENSGT00940000162835"/>
<dbReference type="HOGENOM" id="CLU_012526_5_5_1"/>
<dbReference type="InParanoid" id="P47881"/>
<dbReference type="OrthoDB" id="9565031at2759"/>
<dbReference type="PAN-GO" id="P47881">
    <property type="GO annotations" value="3 GO annotations based on evolutionary models"/>
</dbReference>
<dbReference type="PhylomeDB" id="P47881"/>
<dbReference type="TreeFam" id="TF352732"/>
<dbReference type="PathwayCommons" id="P47881"/>
<dbReference type="Reactome" id="R-HSA-381753">
    <property type="pathway name" value="Olfactory Signaling Pathway"/>
</dbReference>
<dbReference type="Reactome" id="R-HSA-9752946">
    <property type="pathway name" value="Expression and translocation of olfactory receptors"/>
</dbReference>
<dbReference type="SignaLink" id="P47881"/>
<dbReference type="BioGRID-ORCS" id="4994">
    <property type="hits" value="8 hits in 751 CRISPR screens"/>
</dbReference>
<dbReference type="GeneWiki" id="OR3A1"/>
<dbReference type="GenomeRNAi" id="4994"/>
<dbReference type="Pharos" id="P47881">
    <property type="development level" value="Tdark"/>
</dbReference>
<dbReference type="PRO" id="PR:P47881"/>
<dbReference type="Proteomes" id="UP000005640">
    <property type="component" value="Chromosome 17"/>
</dbReference>
<dbReference type="RNAct" id="P47881">
    <property type="molecule type" value="protein"/>
</dbReference>
<dbReference type="Bgee" id="ENSG00000180090">
    <property type="expression patterns" value="Expressed in male germ line stem cell (sensu Vertebrata) in testis and 10 other cell types or tissues"/>
</dbReference>
<dbReference type="ExpressionAtlas" id="P47881">
    <property type="expression patterns" value="baseline and differential"/>
</dbReference>
<dbReference type="GO" id="GO:0005886">
    <property type="term" value="C:plasma membrane"/>
    <property type="evidence" value="ECO:0000318"/>
    <property type="project" value="GO_Central"/>
</dbReference>
<dbReference type="GO" id="GO:0004930">
    <property type="term" value="F:G protein-coupled receptor activity"/>
    <property type="evidence" value="ECO:0007669"/>
    <property type="project" value="UniProtKB-KW"/>
</dbReference>
<dbReference type="GO" id="GO:0004984">
    <property type="term" value="F:olfactory receptor activity"/>
    <property type="evidence" value="ECO:0000318"/>
    <property type="project" value="GO_Central"/>
</dbReference>
<dbReference type="GO" id="GO:0007165">
    <property type="term" value="P:signal transduction"/>
    <property type="evidence" value="ECO:0000318"/>
    <property type="project" value="GO_Central"/>
</dbReference>
<dbReference type="FunFam" id="1.20.1070.10:FF:000010">
    <property type="entry name" value="Olfactory receptor"/>
    <property type="match status" value="1"/>
</dbReference>
<dbReference type="Gene3D" id="1.20.1070.10">
    <property type="entry name" value="Rhodopsin 7-helix transmembrane proteins"/>
    <property type="match status" value="1"/>
</dbReference>
<dbReference type="InterPro" id="IPR000276">
    <property type="entry name" value="GPCR_Rhodpsn"/>
</dbReference>
<dbReference type="InterPro" id="IPR017452">
    <property type="entry name" value="GPCR_Rhodpsn_7TM"/>
</dbReference>
<dbReference type="InterPro" id="IPR000725">
    <property type="entry name" value="Olfact_rcpt"/>
</dbReference>
<dbReference type="PANTHER" id="PTHR48001">
    <property type="entry name" value="OLFACTORY RECEPTOR"/>
    <property type="match status" value="1"/>
</dbReference>
<dbReference type="Pfam" id="PF13853">
    <property type="entry name" value="7tm_4"/>
    <property type="match status" value="1"/>
</dbReference>
<dbReference type="PRINTS" id="PR00237">
    <property type="entry name" value="GPCRRHODOPSN"/>
</dbReference>
<dbReference type="PRINTS" id="PR00245">
    <property type="entry name" value="OLFACTORYR"/>
</dbReference>
<dbReference type="SUPFAM" id="SSF81321">
    <property type="entry name" value="Family A G protein-coupled receptor-like"/>
    <property type="match status" value="1"/>
</dbReference>
<dbReference type="PROSITE" id="PS00237">
    <property type="entry name" value="G_PROTEIN_RECEP_F1_1"/>
    <property type="match status" value="1"/>
</dbReference>
<dbReference type="PROSITE" id="PS50262">
    <property type="entry name" value="G_PROTEIN_RECEP_F1_2"/>
    <property type="match status" value="1"/>
</dbReference>
<keyword id="KW-1003">Cell membrane</keyword>
<keyword id="KW-1015">Disulfide bond</keyword>
<keyword id="KW-0297">G-protein coupled receptor</keyword>
<keyword id="KW-0325">Glycoprotein</keyword>
<keyword id="KW-0472">Membrane</keyword>
<keyword id="KW-0552">Olfaction</keyword>
<keyword id="KW-0675">Receptor</keyword>
<keyword id="KW-1185">Reference proteome</keyword>
<keyword id="KW-0716">Sensory transduction</keyword>
<keyword id="KW-0807">Transducer</keyword>
<keyword id="KW-0812">Transmembrane</keyword>
<keyword id="KW-1133">Transmembrane helix</keyword>
<organism>
    <name type="scientific">Homo sapiens</name>
    <name type="common">Human</name>
    <dbReference type="NCBI Taxonomy" id="9606"/>
    <lineage>
        <taxon>Eukaryota</taxon>
        <taxon>Metazoa</taxon>
        <taxon>Chordata</taxon>
        <taxon>Craniata</taxon>
        <taxon>Vertebrata</taxon>
        <taxon>Euteleostomi</taxon>
        <taxon>Mammalia</taxon>
        <taxon>Eutheria</taxon>
        <taxon>Euarchontoglires</taxon>
        <taxon>Primates</taxon>
        <taxon>Haplorrhini</taxon>
        <taxon>Catarrhini</taxon>
        <taxon>Hominidae</taxon>
        <taxon>Homo</taxon>
    </lineage>
</organism>
<gene>
    <name type="primary">OR3A1</name>
    <name type="synonym">OLFRA03</name>
</gene>
<comment type="function">
    <text evidence="7">Odorant receptor.</text>
</comment>
<comment type="subcellular location">
    <subcellularLocation>
        <location>Cell membrane</location>
        <topology>Multi-pass membrane protein</topology>
    </subcellularLocation>
</comment>
<comment type="similarity">
    <text evidence="2">Belongs to the G-protein coupled receptor 1 family.</text>
</comment>
<comment type="online information" name="Human Olfactory Receptor Data Exploratorium (HORDE)">
    <link uri="https://genome.weizmann.ac.il/horde/card/index/symbol:OR3A1/term:OR3A1/type:keyword"/>
</comment>
<feature type="chain" id="PRO_0000150515" description="Olfactory receptor 3A1">
    <location>
        <begin position="1"/>
        <end position="315"/>
    </location>
</feature>
<feature type="topological domain" description="Extracellular" evidence="1">
    <location>
        <begin position="1"/>
        <end position="28"/>
    </location>
</feature>
<feature type="transmembrane region" description="Helical; Name=1" evidence="1">
    <location>
        <begin position="29"/>
        <end position="52"/>
    </location>
</feature>
<feature type="topological domain" description="Cytoplasmic" evidence="1">
    <location>
        <begin position="53"/>
        <end position="60"/>
    </location>
</feature>
<feature type="transmembrane region" description="Helical; Name=2" evidence="1">
    <location>
        <begin position="61"/>
        <end position="82"/>
    </location>
</feature>
<feature type="topological domain" description="Extracellular" evidence="1">
    <location>
        <begin position="83"/>
        <end position="103"/>
    </location>
</feature>
<feature type="transmembrane region" description="Helical; Name=3" evidence="1">
    <location>
        <begin position="104"/>
        <end position="123"/>
    </location>
</feature>
<feature type="topological domain" description="Cytoplasmic" evidence="1">
    <location>
        <begin position="124"/>
        <end position="143"/>
    </location>
</feature>
<feature type="transmembrane region" description="Helical; Name=4" evidence="1">
    <location>
        <begin position="144"/>
        <end position="161"/>
    </location>
</feature>
<feature type="topological domain" description="Extracellular" evidence="1">
    <location>
        <begin position="162"/>
        <end position="199"/>
    </location>
</feature>
<feature type="transmembrane region" description="Helical; Name=5" evidence="1">
    <location>
        <begin position="200"/>
        <end position="223"/>
    </location>
</feature>
<feature type="topological domain" description="Cytoplasmic" evidence="1">
    <location>
        <begin position="224"/>
        <end position="240"/>
    </location>
</feature>
<feature type="transmembrane region" description="Helical; Name=6" evidence="1">
    <location>
        <begin position="241"/>
        <end position="264"/>
    </location>
</feature>
<feature type="topological domain" description="Extracellular" evidence="1">
    <location>
        <begin position="265"/>
        <end position="275"/>
    </location>
</feature>
<feature type="transmembrane region" description="Helical; Name=7" evidence="1">
    <location>
        <begin position="276"/>
        <end position="295"/>
    </location>
</feature>
<feature type="topological domain" description="Cytoplasmic" evidence="1">
    <location>
        <begin position="296"/>
        <end position="315"/>
    </location>
</feature>
<feature type="glycosylation site" description="N-linked (GlcNAc...) asparagine" evidence="1">
    <location>
        <position position="8"/>
    </location>
</feature>
<feature type="disulfide bond" evidence="2">
    <location>
        <begin position="100"/>
        <end position="192"/>
    </location>
</feature>
<feature type="sequence variant" id="VAR_057542" description="In dbSNP:rs16952828.">
    <original>S</original>
    <variation>G</variation>
    <location>
        <position position="78"/>
    </location>
</feature>
<feature type="sequence variant" id="VAR_012059" description="In dbSNP:rs703903." evidence="3 4 5 6">
    <original>R</original>
    <variation>Q</variation>
    <location>
        <position position="125"/>
    </location>
</feature>
<feature type="sequence conflict" description="In Ref. 6; AAA18347." evidence="7" ref="6">
    <original>A</original>
    <variation>D</variation>
    <location>
        <position position="120"/>
    </location>
</feature>
<proteinExistence type="evidence at transcript level"/>
<accession>P47881</accession>
<accession>Q4VB06</accession>
<accession>Q6IFM4</accession>
<sequence length="315" mass="34609">MQPESGANGTVIAEFILLGLLEAPGLQPVVFVLFLFAYLVTVRGNLSILAAVLVEPKLHTPMYFFLGNLSVLDVGCISVTVPSMLSRLLSRKRAVPCGACLTQLFFFHLFVGVDCFLLTAMAYDRFLAICRPLTYSTRMSQTVQRMLVAASWACAFTNALTHTVAMSTLNFCGPNVINHFYCDLPQLFQLSCSSTQLNELLLFAVGFIMAGTPMALIVISYIHVAAAVLRIRSVEGRKKAFSTCGSHLTVVAIFYGSGIFNYMRLGSTKLSDKDKAVGIFNTVINPMLNPIIYSFRNPDVQSAIWRMLTGRRSLA</sequence>
<evidence type="ECO:0000255" key="1"/>
<evidence type="ECO:0000255" key="2">
    <source>
        <dbReference type="PROSITE-ProRule" id="PRU00521"/>
    </source>
</evidence>
<evidence type="ECO:0000269" key="3">
    <source>
    </source>
</evidence>
<evidence type="ECO:0000269" key="4">
    <source>
    </source>
</evidence>
<evidence type="ECO:0000269" key="5">
    <source>
    </source>
</evidence>
<evidence type="ECO:0000269" key="6">
    <source>
    </source>
</evidence>
<evidence type="ECO:0000305" key="7"/>
<reference key="1">
    <citation type="journal article" date="1996" name="Gene">
        <title>Olfactory receptor-encoding genes and pseudogenes are expressed in humans.</title>
        <authorList>
            <person name="Crowe M.L."/>
            <person name="Perry B.N."/>
            <person name="Connerton I.F."/>
        </authorList>
    </citation>
    <scope>NUCLEOTIDE SEQUENCE [GENOMIC DNA]</scope>
    <scope>VARIANT GLN-125</scope>
</reference>
<reference key="2">
    <citation type="journal article" date="1996" name="Genomics">
        <title>Sequence analysis in the olfactory receptor gene cluster on human chromosome 17: recombinatorial events affecting receptor diversity.</title>
        <authorList>
            <person name="Glusman G."/>
            <person name="Clifton S."/>
            <person name="Roe B."/>
            <person name="Lancet D."/>
        </authorList>
    </citation>
    <scope>NUCLEOTIDE SEQUENCE [GENOMIC DNA]</scope>
</reference>
<reference key="3">
    <citation type="journal article" date="2000" name="Genomics">
        <title>Sequence, structure, and evolution of a complete human olfactory receptor gene cluster.</title>
        <authorList>
            <person name="Glusman G."/>
            <person name="Sosinsky A."/>
            <person name="Ben-Asher E."/>
            <person name="Avidan N."/>
            <person name="Sonkin D."/>
            <person name="Bahar A."/>
            <person name="Rosenthal A."/>
            <person name="Clifton S."/>
            <person name="Roe B."/>
            <person name="Ferraz C."/>
            <person name="Demaille J.G."/>
            <person name="Lancet D."/>
        </authorList>
    </citation>
    <scope>NUCLEOTIDE SEQUENCE [GENOMIC DNA]</scope>
    <scope>VARIANT GLN-125</scope>
</reference>
<reference key="4">
    <citation type="journal article" date="2006" name="Nature">
        <title>DNA sequence of human chromosome 17 and analysis of rearrangement in the human lineage.</title>
        <authorList>
            <person name="Zody M.C."/>
            <person name="Garber M."/>
            <person name="Adams D.J."/>
            <person name="Sharpe T."/>
            <person name="Harrow J."/>
            <person name="Lupski J.R."/>
            <person name="Nicholson C."/>
            <person name="Searle S.M."/>
            <person name="Wilming L."/>
            <person name="Young S.K."/>
            <person name="Abouelleil A."/>
            <person name="Allen N.R."/>
            <person name="Bi W."/>
            <person name="Bloom T."/>
            <person name="Borowsky M.L."/>
            <person name="Bugalter B.E."/>
            <person name="Butler J."/>
            <person name="Chang J.L."/>
            <person name="Chen C.-K."/>
            <person name="Cook A."/>
            <person name="Corum B."/>
            <person name="Cuomo C.A."/>
            <person name="de Jong P.J."/>
            <person name="DeCaprio D."/>
            <person name="Dewar K."/>
            <person name="FitzGerald M."/>
            <person name="Gilbert J."/>
            <person name="Gibson R."/>
            <person name="Gnerre S."/>
            <person name="Goldstein S."/>
            <person name="Grafham D.V."/>
            <person name="Grocock R."/>
            <person name="Hafez N."/>
            <person name="Hagopian D.S."/>
            <person name="Hart E."/>
            <person name="Norman C.H."/>
            <person name="Humphray S."/>
            <person name="Jaffe D.B."/>
            <person name="Jones M."/>
            <person name="Kamal M."/>
            <person name="Khodiyar V.K."/>
            <person name="LaButti K."/>
            <person name="Laird G."/>
            <person name="Lehoczky J."/>
            <person name="Liu X."/>
            <person name="Lokyitsang T."/>
            <person name="Loveland J."/>
            <person name="Lui A."/>
            <person name="Macdonald P."/>
            <person name="Major J.E."/>
            <person name="Matthews L."/>
            <person name="Mauceli E."/>
            <person name="McCarroll S.A."/>
            <person name="Mihalev A.H."/>
            <person name="Mudge J."/>
            <person name="Nguyen C."/>
            <person name="Nicol R."/>
            <person name="O'Leary S.B."/>
            <person name="Osoegawa K."/>
            <person name="Schwartz D.C."/>
            <person name="Shaw-Smith C."/>
            <person name="Stankiewicz P."/>
            <person name="Steward C."/>
            <person name="Swarbreck D."/>
            <person name="Venkataraman V."/>
            <person name="Whittaker C.A."/>
            <person name="Yang X."/>
            <person name="Zimmer A.R."/>
            <person name="Bradley A."/>
            <person name="Hubbard T."/>
            <person name="Birren B.W."/>
            <person name="Rogers J."/>
            <person name="Lander E.S."/>
            <person name="Nusbaum C."/>
        </authorList>
    </citation>
    <scope>NUCLEOTIDE SEQUENCE [LARGE SCALE GENOMIC DNA]</scope>
</reference>
<reference key="5">
    <citation type="journal article" date="2004" name="Genome Res.">
        <title>The status, quality, and expansion of the NIH full-length cDNA project: the Mammalian Gene Collection (MGC).</title>
        <authorList>
            <consortium name="The MGC Project Team"/>
        </authorList>
    </citation>
    <scope>NUCLEOTIDE SEQUENCE [LARGE SCALE MRNA]</scope>
    <scope>VARIANT GLN-125</scope>
</reference>
<reference key="6">
    <citation type="journal article" date="1994" name="Hum. Mol. Genet.">
        <title>Olfactory receptor gene cluster on human chromosome 17: possible duplication of an ancestral receptor repertoire.</title>
        <authorList>
            <person name="Ben-Arie N."/>
            <person name="Lancet D."/>
            <person name="Taylor C."/>
            <person name="Khen M."/>
            <person name="Walker N."/>
            <person name="Ledbetter D.H."/>
            <person name="Carrozzo R."/>
            <person name="Patel K."/>
            <person name="Sheer D."/>
            <person name="Lehrach H."/>
            <person name="North M.A."/>
        </authorList>
    </citation>
    <scope>NUCLEOTIDE SEQUENCE [GENOMIC DNA] OF 71-286</scope>
    <scope>VARIANT GLN-125</scope>
</reference>
<reference key="7">
    <citation type="journal article" date="2004" name="Proc. Natl. Acad. Sci. U.S.A.">
        <title>The human olfactory receptor gene family.</title>
        <authorList>
            <person name="Malnic B."/>
            <person name="Godfrey P.A."/>
            <person name="Buck L.B."/>
        </authorList>
    </citation>
    <scope>IDENTIFICATION</scope>
</reference>
<reference key="8">
    <citation type="journal article" date="2004" name="Proc. Natl. Acad. Sci. U.S.A.">
        <authorList>
            <person name="Malnic B."/>
            <person name="Godfrey P.A."/>
            <person name="Buck L.B."/>
        </authorList>
    </citation>
    <scope>ERRATUM OF PUBMED:14983052</scope>
</reference>